<feature type="initiator methionine" description="Removed" evidence="8">
    <location>
        <position position="1"/>
    </location>
</feature>
<feature type="chain" id="PRO_0000116937" description="Adenosylhomocysteinase">
    <location>
        <begin position="2"/>
        <end position="449"/>
    </location>
</feature>
<feature type="binding site" evidence="1">
    <location>
        <position position="58"/>
    </location>
    <ligand>
        <name>substrate</name>
    </ligand>
</feature>
<feature type="binding site" evidence="1">
    <location>
        <position position="134"/>
    </location>
    <ligand>
        <name>substrate</name>
    </ligand>
</feature>
<feature type="binding site" evidence="1">
    <location>
        <position position="159"/>
    </location>
    <ligand>
        <name>substrate</name>
    </ligand>
</feature>
<feature type="binding site" evidence="1">
    <location>
        <begin position="160"/>
        <end position="162"/>
    </location>
    <ligand>
        <name>NAD(+)</name>
        <dbReference type="ChEBI" id="CHEBI:57540"/>
    </ligand>
</feature>
<feature type="binding site" evidence="1">
    <location>
        <position position="189"/>
    </location>
    <ligand>
        <name>substrate</name>
    </ligand>
</feature>
<feature type="binding site" evidence="1">
    <location>
        <position position="193"/>
    </location>
    <ligand>
        <name>substrate</name>
    </ligand>
</feature>
<feature type="binding site" evidence="1">
    <location>
        <position position="194"/>
    </location>
    <ligand>
        <name>NAD(+)</name>
        <dbReference type="ChEBI" id="CHEBI:57540"/>
    </ligand>
</feature>
<feature type="binding site" evidence="1">
    <location>
        <begin position="223"/>
        <end position="228"/>
    </location>
    <ligand>
        <name>NAD(+)</name>
        <dbReference type="ChEBI" id="CHEBI:57540"/>
    </ligand>
</feature>
<feature type="binding site" evidence="1">
    <location>
        <position position="246"/>
    </location>
    <ligand>
        <name>NAD(+)</name>
        <dbReference type="ChEBI" id="CHEBI:57540"/>
    </ligand>
</feature>
<feature type="binding site" evidence="1">
    <location>
        <begin position="302"/>
        <end position="304"/>
    </location>
    <ligand>
        <name>NAD(+)</name>
        <dbReference type="ChEBI" id="CHEBI:57540"/>
    </ligand>
</feature>
<feature type="binding site" evidence="1">
    <location>
        <position position="349"/>
    </location>
    <ligand>
        <name>NAD(+)</name>
        <dbReference type="ChEBI" id="CHEBI:57540"/>
    </ligand>
</feature>
<feature type="modified residue" description="N-acetylserine" evidence="8">
    <location>
        <position position="2"/>
    </location>
</feature>
<feature type="modified residue" description="Phosphothreonine" evidence="3 4 5 6">
    <location>
        <position position="393"/>
    </location>
</feature>
<feature type="cross-link" description="Glycyl lysine isopeptide (Lys-Gly) (interchain with G-Cter in ubiquitin)" evidence="7">
    <location>
        <position position="21"/>
    </location>
</feature>
<feature type="cross-link" description="Glycyl lysine isopeptide (Lys-Gly) (interchain with G-Cter in ubiquitin)" evidence="7">
    <location>
        <position position="413"/>
    </location>
</feature>
<dbReference type="EC" id="3.13.2.1"/>
<dbReference type="EMBL" id="U18796">
    <property type="protein sequence ID" value="AAB64578.1"/>
    <property type="molecule type" value="Genomic_DNA"/>
</dbReference>
<dbReference type="EMBL" id="AY692801">
    <property type="protein sequence ID" value="AAT92820.1"/>
    <property type="molecule type" value="Genomic_DNA"/>
</dbReference>
<dbReference type="EMBL" id="BK006939">
    <property type="protein sequence ID" value="DAA07697.1"/>
    <property type="molecule type" value="Genomic_DNA"/>
</dbReference>
<dbReference type="PIR" id="S50546">
    <property type="entry name" value="S50546"/>
</dbReference>
<dbReference type="RefSeq" id="NP_010961.3">
    <property type="nucleotide sequence ID" value="NM_001178934.3"/>
</dbReference>
<dbReference type="SMR" id="P39954"/>
<dbReference type="BioGRID" id="36779">
    <property type="interactions" value="95"/>
</dbReference>
<dbReference type="DIP" id="DIP-5184N"/>
<dbReference type="FunCoup" id="P39954">
    <property type="interactions" value="1277"/>
</dbReference>
<dbReference type="IntAct" id="P39954">
    <property type="interactions" value="53"/>
</dbReference>
<dbReference type="MINT" id="P39954"/>
<dbReference type="STRING" id="4932.YER043C"/>
<dbReference type="CarbonylDB" id="P39954"/>
<dbReference type="iPTMnet" id="P39954"/>
<dbReference type="PaxDb" id="4932-YER043C"/>
<dbReference type="PeptideAtlas" id="P39954"/>
<dbReference type="EnsemblFungi" id="YER043C_mRNA">
    <property type="protein sequence ID" value="YER043C"/>
    <property type="gene ID" value="YER043C"/>
</dbReference>
<dbReference type="GeneID" id="856766"/>
<dbReference type="KEGG" id="sce:YER043C"/>
<dbReference type="AGR" id="SGD:S000000845"/>
<dbReference type="SGD" id="S000000845">
    <property type="gene designation" value="SAH1"/>
</dbReference>
<dbReference type="VEuPathDB" id="FungiDB:YER043C"/>
<dbReference type="eggNOG" id="KOG1370">
    <property type="taxonomic scope" value="Eukaryota"/>
</dbReference>
<dbReference type="GeneTree" id="ENSGT00950000182981"/>
<dbReference type="HOGENOM" id="CLU_025194_2_1_1"/>
<dbReference type="InParanoid" id="P39954"/>
<dbReference type="OMA" id="YIGVTVE"/>
<dbReference type="OrthoDB" id="10007170at2759"/>
<dbReference type="BioCyc" id="YEAST:YER043C-MONOMER"/>
<dbReference type="Reactome" id="R-SCE-156581">
    <property type="pathway name" value="Methylation"/>
</dbReference>
<dbReference type="Reactome" id="R-SCE-1614635">
    <property type="pathway name" value="Sulfur amino acid metabolism"/>
</dbReference>
<dbReference type="UniPathway" id="UPA00314">
    <property type="reaction ID" value="UER00076"/>
</dbReference>
<dbReference type="BioGRID-ORCS" id="856766">
    <property type="hits" value="8 hits in 10 CRISPR screens"/>
</dbReference>
<dbReference type="PRO" id="PR:P39954"/>
<dbReference type="Proteomes" id="UP000002311">
    <property type="component" value="Chromosome V"/>
</dbReference>
<dbReference type="RNAct" id="P39954">
    <property type="molecule type" value="protein"/>
</dbReference>
<dbReference type="GO" id="GO:0005737">
    <property type="term" value="C:cytoplasm"/>
    <property type="evidence" value="ECO:0007005"/>
    <property type="project" value="SGD"/>
</dbReference>
<dbReference type="GO" id="GO:0005829">
    <property type="term" value="C:cytosol"/>
    <property type="evidence" value="ECO:0000318"/>
    <property type="project" value="GO_Central"/>
</dbReference>
<dbReference type="GO" id="GO:0004013">
    <property type="term" value="F:adenosylhomocysteinase activity"/>
    <property type="evidence" value="ECO:0000315"/>
    <property type="project" value="SGD"/>
</dbReference>
<dbReference type="GO" id="GO:0006730">
    <property type="term" value="P:one-carbon metabolic process"/>
    <property type="evidence" value="ECO:0007669"/>
    <property type="project" value="UniProtKB-KW"/>
</dbReference>
<dbReference type="GO" id="GO:0006656">
    <property type="term" value="P:phosphatidylcholine biosynthetic process"/>
    <property type="evidence" value="ECO:0000315"/>
    <property type="project" value="SGD"/>
</dbReference>
<dbReference type="GO" id="GO:0033353">
    <property type="term" value="P:S-adenosylmethionine cycle"/>
    <property type="evidence" value="ECO:0000315"/>
    <property type="project" value="SGD"/>
</dbReference>
<dbReference type="GO" id="GO:0006641">
    <property type="term" value="P:triglyceride metabolic process"/>
    <property type="evidence" value="ECO:0000315"/>
    <property type="project" value="SGD"/>
</dbReference>
<dbReference type="CDD" id="cd00401">
    <property type="entry name" value="SAHH"/>
    <property type="match status" value="1"/>
</dbReference>
<dbReference type="FunFam" id="3.40.50.1480:FF:000004">
    <property type="entry name" value="Adenosylhomocysteinase"/>
    <property type="match status" value="1"/>
</dbReference>
<dbReference type="FunFam" id="3.40.50.720:FF:000004">
    <property type="entry name" value="Adenosylhomocysteinase"/>
    <property type="match status" value="1"/>
</dbReference>
<dbReference type="Gene3D" id="3.40.50.1480">
    <property type="entry name" value="Adenosylhomocysteinase-like"/>
    <property type="match status" value="1"/>
</dbReference>
<dbReference type="Gene3D" id="3.40.50.720">
    <property type="entry name" value="NAD(P)-binding Rossmann-like Domain"/>
    <property type="match status" value="1"/>
</dbReference>
<dbReference type="HAMAP" id="MF_00563">
    <property type="entry name" value="AdoHcyase"/>
    <property type="match status" value="1"/>
</dbReference>
<dbReference type="InterPro" id="IPR042172">
    <property type="entry name" value="Adenosylhomocyst_ase-like_sf"/>
</dbReference>
<dbReference type="InterPro" id="IPR000043">
    <property type="entry name" value="Adenosylhomocysteinase-like"/>
</dbReference>
<dbReference type="InterPro" id="IPR015878">
    <property type="entry name" value="Ado_hCys_hydrolase_NAD-bd"/>
</dbReference>
<dbReference type="InterPro" id="IPR036291">
    <property type="entry name" value="NAD(P)-bd_dom_sf"/>
</dbReference>
<dbReference type="InterPro" id="IPR020082">
    <property type="entry name" value="S-Ado-L-homoCys_hydrolase_CS"/>
</dbReference>
<dbReference type="NCBIfam" id="TIGR00936">
    <property type="entry name" value="ahcY"/>
    <property type="match status" value="1"/>
</dbReference>
<dbReference type="NCBIfam" id="NF004005">
    <property type="entry name" value="PRK05476.2-3"/>
    <property type="match status" value="1"/>
</dbReference>
<dbReference type="PANTHER" id="PTHR23420">
    <property type="entry name" value="ADENOSYLHOMOCYSTEINASE"/>
    <property type="match status" value="1"/>
</dbReference>
<dbReference type="PANTHER" id="PTHR23420:SF0">
    <property type="entry name" value="ADENOSYLHOMOCYSTEINASE"/>
    <property type="match status" value="1"/>
</dbReference>
<dbReference type="Pfam" id="PF05221">
    <property type="entry name" value="AdoHcyase"/>
    <property type="match status" value="1"/>
</dbReference>
<dbReference type="Pfam" id="PF00670">
    <property type="entry name" value="AdoHcyase_NAD"/>
    <property type="match status" value="1"/>
</dbReference>
<dbReference type="PIRSF" id="PIRSF001109">
    <property type="entry name" value="Ad_hcy_hydrolase"/>
    <property type="match status" value="1"/>
</dbReference>
<dbReference type="SMART" id="SM00996">
    <property type="entry name" value="AdoHcyase"/>
    <property type="match status" value="1"/>
</dbReference>
<dbReference type="SMART" id="SM00997">
    <property type="entry name" value="AdoHcyase_NAD"/>
    <property type="match status" value="1"/>
</dbReference>
<dbReference type="SUPFAM" id="SSF52283">
    <property type="entry name" value="Formate/glycerate dehydrogenase catalytic domain-like"/>
    <property type="match status" value="1"/>
</dbReference>
<dbReference type="SUPFAM" id="SSF51735">
    <property type="entry name" value="NAD(P)-binding Rossmann-fold domains"/>
    <property type="match status" value="1"/>
</dbReference>
<dbReference type="PROSITE" id="PS00738">
    <property type="entry name" value="ADOHCYASE_1"/>
    <property type="match status" value="1"/>
</dbReference>
<dbReference type="PROSITE" id="PS00739">
    <property type="entry name" value="ADOHCYASE_2"/>
    <property type="match status" value="1"/>
</dbReference>
<evidence type="ECO:0000250" key="1"/>
<evidence type="ECO:0000305" key="2"/>
<evidence type="ECO:0007744" key="3">
    <source>
    </source>
</evidence>
<evidence type="ECO:0007744" key="4">
    <source>
    </source>
</evidence>
<evidence type="ECO:0007744" key="5">
    <source>
    </source>
</evidence>
<evidence type="ECO:0007744" key="6">
    <source>
    </source>
</evidence>
<evidence type="ECO:0007744" key="7">
    <source>
    </source>
</evidence>
<evidence type="ECO:0007744" key="8">
    <source>
    </source>
</evidence>
<name>SAHH_YEAST</name>
<reference key="1">
    <citation type="journal article" date="1997" name="Nature">
        <title>The nucleotide sequence of Saccharomyces cerevisiae chromosome V.</title>
        <authorList>
            <person name="Dietrich F.S."/>
            <person name="Mulligan J.T."/>
            <person name="Hennessy K.M."/>
            <person name="Yelton M.A."/>
            <person name="Allen E."/>
            <person name="Araujo R."/>
            <person name="Aviles E."/>
            <person name="Berno A."/>
            <person name="Brennan T."/>
            <person name="Carpenter J."/>
            <person name="Chen E."/>
            <person name="Cherry J.M."/>
            <person name="Chung E."/>
            <person name="Duncan M."/>
            <person name="Guzman E."/>
            <person name="Hartzell G."/>
            <person name="Hunicke-Smith S."/>
            <person name="Hyman R.W."/>
            <person name="Kayser A."/>
            <person name="Komp C."/>
            <person name="Lashkari D."/>
            <person name="Lew H."/>
            <person name="Lin D."/>
            <person name="Mosedale D."/>
            <person name="Nakahara K."/>
            <person name="Namath A."/>
            <person name="Norgren R."/>
            <person name="Oefner P."/>
            <person name="Oh C."/>
            <person name="Petel F.X."/>
            <person name="Roberts D."/>
            <person name="Sehl P."/>
            <person name="Schramm S."/>
            <person name="Shogren T."/>
            <person name="Smith V."/>
            <person name="Taylor P."/>
            <person name="Wei Y."/>
            <person name="Botstein D."/>
            <person name="Davis R.W."/>
        </authorList>
    </citation>
    <scope>NUCLEOTIDE SEQUENCE [LARGE SCALE GENOMIC DNA]</scope>
    <source>
        <strain>ATCC 204508 / S288c</strain>
    </source>
</reference>
<reference key="2">
    <citation type="journal article" date="2014" name="G3 (Bethesda)">
        <title>The reference genome sequence of Saccharomyces cerevisiae: Then and now.</title>
        <authorList>
            <person name="Engel S.R."/>
            <person name="Dietrich F.S."/>
            <person name="Fisk D.G."/>
            <person name="Binkley G."/>
            <person name="Balakrishnan R."/>
            <person name="Costanzo M.C."/>
            <person name="Dwight S.S."/>
            <person name="Hitz B.C."/>
            <person name="Karra K."/>
            <person name="Nash R.S."/>
            <person name="Weng S."/>
            <person name="Wong E.D."/>
            <person name="Lloyd P."/>
            <person name="Skrzypek M.S."/>
            <person name="Miyasato S.R."/>
            <person name="Simison M."/>
            <person name="Cherry J.M."/>
        </authorList>
    </citation>
    <scope>GENOME REANNOTATION</scope>
    <source>
        <strain>ATCC 204508 / S288c</strain>
    </source>
</reference>
<reference key="3">
    <citation type="journal article" date="2007" name="Genome Res.">
        <title>Approaching a complete repository of sequence-verified protein-encoding clones for Saccharomyces cerevisiae.</title>
        <authorList>
            <person name="Hu Y."/>
            <person name="Rolfs A."/>
            <person name="Bhullar B."/>
            <person name="Murthy T.V.S."/>
            <person name="Zhu C."/>
            <person name="Berger M.F."/>
            <person name="Camargo A.A."/>
            <person name="Kelley F."/>
            <person name="McCarron S."/>
            <person name="Jepson D."/>
            <person name="Richardson A."/>
            <person name="Raphael J."/>
            <person name="Moreira D."/>
            <person name="Taycher E."/>
            <person name="Zuo D."/>
            <person name="Mohr S."/>
            <person name="Kane M.F."/>
            <person name="Williamson J."/>
            <person name="Simpson A.J.G."/>
            <person name="Bulyk M.L."/>
            <person name="Harlow E."/>
            <person name="Marsischky G."/>
            <person name="Kolodner R.D."/>
            <person name="LaBaer J."/>
        </authorList>
    </citation>
    <scope>NUCLEOTIDE SEQUENCE [GENOMIC DNA]</scope>
    <source>
        <strain>ATCC 204508 / S288c</strain>
    </source>
</reference>
<reference key="4">
    <citation type="journal article" date="2007" name="J. Proteome Res.">
        <title>Large-scale phosphorylation analysis of alpha-factor-arrested Saccharomyces cerevisiae.</title>
        <authorList>
            <person name="Li X."/>
            <person name="Gerber S.A."/>
            <person name="Rudner A.D."/>
            <person name="Beausoleil S.A."/>
            <person name="Haas W."/>
            <person name="Villen J."/>
            <person name="Elias J.E."/>
            <person name="Gygi S.P."/>
        </authorList>
    </citation>
    <scope>PHOSPHORYLATION [LARGE SCALE ANALYSIS] AT THR-393</scope>
    <scope>IDENTIFICATION BY MASS SPECTROMETRY [LARGE SCALE ANALYSIS]</scope>
    <source>
        <strain>ADR376</strain>
    </source>
</reference>
<reference key="5">
    <citation type="journal article" date="2007" name="Proc. Natl. Acad. Sci. U.S.A.">
        <title>Analysis of phosphorylation sites on proteins from Saccharomyces cerevisiae by electron transfer dissociation (ETD) mass spectrometry.</title>
        <authorList>
            <person name="Chi A."/>
            <person name="Huttenhower C."/>
            <person name="Geer L.Y."/>
            <person name="Coon J.J."/>
            <person name="Syka J.E.P."/>
            <person name="Bai D.L."/>
            <person name="Shabanowitz J."/>
            <person name="Burke D.J."/>
            <person name="Troyanskaya O.G."/>
            <person name="Hunt D.F."/>
        </authorList>
    </citation>
    <scope>PHOSPHORYLATION [LARGE SCALE ANALYSIS] AT THR-393</scope>
    <scope>IDENTIFICATION BY MASS SPECTROMETRY [LARGE SCALE ANALYSIS]</scope>
</reference>
<reference key="6">
    <citation type="journal article" date="2008" name="Mol. Cell. Proteomics">
        <title>A multidimensional chromatography technology for in-depth phosphoproteome analysis.</title>
        <authorList>
            <person name="Albuquerque C.P."/>
            <person name="Smolka M.B."/>
            <person name="Payne S.H."/>
            <person name="Bafna V."/>
            <person name="Eng J."/>
            <person name="Zhou H."/>
        </authorList>
    </citation>
    <scope>PHOSPHORYLATION [LARGE SCALE ANALYSIS] AT THR-393</scope>
    <scope>IDENTIFICATION BY MASS SPECTROMETRY [LARGE SCALE ANALYSIS]</scope>
</reference>
<reference key="7">
    <citation type="journal article" date="2009" name="Science">
        <title>Global analysis of Cdk1 substrate phosphorylation sites provides insights into evolution.</title>
        <authorList>
            <person name="Holt L.J."/>
            <person name="Tuch B.B."/>
            <person name="Villen J."/>
            <person name="Johnson A.D."/>
            <person name="Gygi S.P."/>
            <person name="Morgan D.O."/>
        </authorList>
    </citation>
    <scope>PHOSPHORYLATION [LARGE SCALE ANALYSIS] AT THR-393</scope>
    <scope>IDENTIFICATION BY MASS SPECTROMETRY [LARGE SCALE ANALYSIS]</scope>
</reference>
<reference key="8">
    <citation type="journal article" date="2012" name="Proc. Natl. Acad. Sci. U.S.A.">
        <title>N-terminal acetylome analyses and functional insights of the N-terminal acetyltransferase NatB.</title>
        <authorList>
            <person name="Van Damme P."/>
            <person name="Lasa M."/>
            <person name="Polevoda B."/>
            <person name="Gazquez C."/>
            <person name="Elosegui-Artola A."/>
            <person name="Kim D.S."/>
            <person name="De Juan-Pardo E."/>
            <person name="Demeyer K."/>
            <person name="Hole K."/>
            <person name="Larrea E."/>
            <person name="Timmerman E."/>
            <person name="Prieto J."/>
            <person name="Arnesen T."/>
            <person name="Sherman F."/>
            <person name="Gevaert K."/>
            <person name="Aldabe R."/>
        </authorList>
    </citation>
    <scope>ACETYLATION [LARGE SCALE ANALYSIS] AT SER-2</scope>
    <scope>CLEAVAGE OF INITIATOR METHIONINE [LARGE SCALE ANALYSIS]</scope>
    <scope>IDENTIFICATION BY MASS SPECTROMETRY [LARGE SCALE ANALYSIS]</scope>
</reference>
<reference key="9">
    <citation type="journal article" date="2012" name="Proteomics">
        <title>Sites of ubiquitin attachment in Saccharomyces cerevisiae.</title>
        <authorList>
            <person name="Starita L.M."/>
            <person name="Lo R.S."/>
            <person name="Eng J.K."/>
            <person name="von Haller P.D."/>
            <person name="Fields S."/>
        </authorList>
    </citation>
    <scope>UBIQUITINATION [LARGE SCALE ANALYSIS] AT LYS-21 AND LYS-413</scope>
    <scope>IDENTIFICATION BY MASS SPECTROMETRY [LARGE SCALE ANALYSIS]</scope>
</reference>
<sequence>MSAPAQNYKIADISLAAFGRKEIELAEHEMPGLMAIRKAYGDVQPLKGARIAGCLHMTIQTAVLIETLVALGAEVTWSSCNIYSTQDHAAAAIAASGVPVFAWKGETEEEYLWCIEQQLFAFKDNKKLNLILDDGGDLTTLVHEKHPEMLEDCFGLSEETTTGVHHLYRMVKEGKLKVPAINVNDSVTKSKFDNLYGCRESLVDGIKRATDVMLAGKVAVVAGYGDVGKGCAAALRGMGARVLVTEIDPINALQAAMEGYQVVTMEDASHIGQVFVTTTGCRDIINGEHFINMPEDAIVCNIGHFDIEIDVAWLKANAKECINIKPQVDRYLLSSGRHVILLANGRLVNLGCATGHSSFVMSCSFSNQVLAQIALFKSNDKSFREKHIEFQKTGPFEVGVHVLPKILDEAVAKFHLGNLGVRLTKLSKVQSEYLGIPEEGPFKADHYRY</sequence>
<keyword id="KW-0007">Acetylation</keyword>
<keyword id="KW-0378">Hydrolase</keyword>
<keyword id="KW-1017">Isopeptide bond</keyword>
<keyword id="KW-0520">NAD</keyword>
<keyword id="KW-0554">One-carbon metabolism</keyword>
<keyword id="KW-0597">Phosphoprotein</keyword>
<keyword id="KW-1185">Reference proteome</keyword>
<keyword id="KW-0832">Ubl conjugation</keyword>
<accession>P39954</accession>
<accession>D3DLU3</accession>
<organism>
    <name type="scientific">Saccharomyces cerevisiae (strain ATCC 204508 / S288c)</name>
    <name type="common">Baker's yeast</name>
    <dbReference type="NCBI Taxonomy" id="559292"/>
    <lineage>
        <taxon>Eukaryota</taxon>
        <taxon>Fungi</taxon>
        <taxon>Dikarya</taxon>
        <taxon>Ascomycota</taxon>
        <taxon>Saccharomycotina</taxon>
        <taxon>Saccharomycetes</taxon>
        <taxon>Saccharomycetales</taxon>
        <taxon>Saccharomycetaceae</taxon>
        <taxon>Saccharomyces</taxon>
    </lineage>
</organism>
<proteinExistence type="evidence at protein level"/>
<protein>
    <recommendedName>
        <fullName>Adenosylhomocysteinase</fullName>
        <shortName>AdoHcyase</shortName>
        <ecNumber>3.13.2.1</ecNumber>
    </recommendedName>
    <alternativeName>
        <fullName>S-adenosyl-L-homocysteine hydrolase</fullName>
    </alternativeName>
</protein>
<comment type="function">
    <text evidence="1">Adenosylhomocysteine is a competitive inhibitor of S-adenosyl-L-methionine-dependent methyl transferase reactions; therefore adenosylhomocysteinase may play a key role in the control of methylations via regulation of the intracellular concentration of adenosylhomocysteine.</text>
</comment>
<comment type="catalytic activity">
    <reaction>
        <text>S-adenosyl-L-homocysteine + H2O = L-homocysteine + adenosine</text>
        <dbReference type="Rhea" id="RHEA:21708"/>
        <dbReference type="ChEBI" id="CHEBI:15377"/>
        <dbReference type="ChEBI" id="CHEBI:16335"/>
        <dbReference type="ChEBI" id="CHEBI:57856"/>
        <dbReference type="ChEBI" id="CHEBI:58199"/>
        <dbReference type="EC" id="3.13.2.1"/>
    </reaction>
</comment>
<comment type="cofactor">
    <cofactor>
        <name>NAD(+)</name>
        <dbReference type="ChEBI" id="CHEBI:57540"/>
    </cofactor>
    <text>Binds 1 NAD(+) per subunit.</text>
</comment>
<comment type="pathway">
    <text>Amino-acid biosynthesis; L-homocysteine biosynthesis; L-homocysteine from S-adenosyl-L-homocysteine: step 1/1.</text>
</comment>
<comment type="interaction">
    <interactant intactId="EBI-16451">
        <id>P39954</id>
    </interactant>
    <interactant intactId="EBI-22808">
        <id>P43569</id>
        <label>CAF16</label>
    </interactant>
    <organismsDiffer>false</organismsDiffer>
    <experiments>4</experiments>
</comment>
<comment type="similarity">
    <text evidence="2">Belongs to the adenosylhomocysteinase family.</text>
</comment>
<gene>
    <name type="primary">SAH1</name>
    <name type="ordered locus">YER043C</name>
</gene>